<dbReference type="EMBL" id="AM260522">
    <property type="protein sequence ID" value="CAJ99771.1"/>
    <property type="molecule type" value="Genomic_DNA"/>
</dbReference>
<dbReference type="RefSeq" id="WP_011577881.1">
    <property type="nucleotide sequence ID" value="NC_008229.1"/>
</dbReference>
<dbReference type="SMR" id="Q17X55"/>
<dbReference type="STRING" id="382638.Hac_1001"/>
<dbReference type="GeneID" id="31758383"/>
<dbReference type="KEGG" id="hac:Hac_1001"/>
<dbReference type="eggNOG" id="COG1826">
    <property type="taxonomic scope" value="Bacteria"/>
</dbReference>
<dbReference type="HOGENOM" id="CLU_086034_5_4_7"/>
<dbReference type="BioCyc" id="HACI382638:HAC_RS04310-MONOMER"/>
<dbReference type="Proteomes" id="UP000000775">
    <property type="component" value="Chromosome"/>
</dbReference>
<dbReference type="GO" id="GO:0033281">
    <property type="term" value="C:TAT protein transport complex"/>
    <property type="evidence" value="ECO:0007669"/>
    <property type="project" value="UniProtKB-UniRule"/>
</dbReference>
<dbReference type="GO" id="GO:0008320">
    <property type="term" value="F:protein transmembrane transporter activity"/>
    <property type="evidence" value="ECO:0007669"/>
    <property type="project" value="UniProtKB-UniRule"/>
</dbReference>
<dbReference type="GO" id="GO:0043953">
    <property type="term" value="P:protein transport by the Tat complex"/>
    <property type="evidence" value="ECO:0007669"/>
    <property type="project" value="UniProtKB-UniRule"/>
</dbReference>
<dbReference type="Gene3D" id="1.20.5.3310">
    <property type="match status" value="1"/>
</dbReference>
<dbReference type="HAMAP" id="MF_00236">
    <property type="entry name" value="TatA_E"/>
    <property type="match status" value="1"/>
</dbReference>
<dbReference type="InterPro" id="IPR003369">
    <property type="entry name" value="TatA/B/E"/>
</dbReference>
<dbReference type="InterPro" id="IPR006312">
    <property type="entry name" value="TatA/E"/>
</dbReference>
<dbReference type="NCBIfam" id="TIGR01411">
    <property type="entry name" value="tatAE"/>
    <property type="match status" value="1"/>
</dbReference>
<dbReference type="PANTHER" id="PTHR42982">
    <property type="entry name" value="SEC-INDEPENDENT PROTEIN TRANSLOCASE PROTEIN TATA"/>
    <property type="match status" value="1"/>
</dbReference>
<dbReference type="PANTHER" id="PTHR42982:SF1">
    <property type="entry name" value="SEC-INDEPENDENT PROTEIN TRANSLOCASE PROTEIN TATA"/>
    <property type="match status" value="1"/>
</dbReference>
<dbReference type="Pfam" id="PF02416">
    <property type="entry name" value="TatA_B_E"/>
    <property type="match status" value="1"/>
</dbReference>
<protein>
    <recommendedName>
        <fullName evidence="1">Sec-independent protein translocase protein TatA</fullName>
    </recommendedName>
</protein>
<sequence>MGGFTSIWHWVIVLLVIVLLFGAKKIPELAKGLGSGIKNFKKAVKDDEEEAKNEPKTLDAQVTQAKVHESSEIKNKQEG</sequence>
<reference key="1">
    <citation type="journal article" date="2006" name="PLoS Genet.">
        <title>Who ate whom? Adaptive Helicobacter genomic changes that accompanied a host jump from early humans to large felines.</title>
        <authorList>
            <person name="Eppinger M."/>
            <person name="Baar C."/>
            <person name="Linz B."/>
            <person name="Raddatz G."/>
            <person name="Lanz C."/>
            <person name="Keller H."/>
            <person name="Morelli G."/>
            <person name="Gressmann H."/>
            <person name="Achtman M."/>
            <person name="Schuster S.C."/>
        </authorList>
    </citation>
    <scope>NUCLEOTIDE SEQUENCE [LARGE SCALE GENOMIC DNA]</scope>
    <source>
        <strain>Sheeba</strain>
    </source>
</reference>
<keyword id="KW-0997">Cell inner membrane</keyword>
<keyword id="KW-1003">Cell membrane</keyword>
<keyword id="KW-0472">Membrane</keyword>
<keyword id="KW-0653">Protein transport</keyword>
<keyword id="KW-0811">Translocation</keyword>
<keyword id="KW-0812">Transmembrane</keyword>
<keyword id="KW-1133">Transmembrane helix</keyword>
<keyword id="KW-0813">Transport</keyword>
<feature type="chain" id="PRO_1000044390" description="Sec-independent protein translocase protein TatA">
    <location>
        <begin position="1"/>
        <end position="79"/>
    </location>
</feature>
<feature type="transmembrane region" description="Helical" evidence="1">
    <location>
        <begin position="1"/>
        <end position="21"/>
    </location>
</feature>
<feature type="region of interest" description="Disordered" evidence="2">
    <location>
        <begin position="48"/>
        <end position="79"/>
    </location>
</feature>
<feature type="compositionally biased region" description="Basic and acidic residues" evidence="2">
    <location>
        <begin position="66"/>
        <end position="79"/>
    </location>
</feature>
<accession>Q17X55</accession>
<comment type="function">
    <text evidence="1">Part of the twin-arginine translocation (Tat) system that transports large folded proteins containing a characteristic twin-arginine motif in their signal peptide across membranes. TatA could form the protein-conducting channel of the Tat system.</text>
</comment>
<comment type="subunit">
    <text evidence="1">The Tat system comprises two distinct complexes: a TatABC complex, containing multiple copies of TatA, TatB and TatC subunits, and a separate TatA complex, containing only TatA subunits. Substrates initially bind to the TatABC complex, which probably triggers association of the separate TatA complex to form the active translocon.</text>
</comment>
<comment type="subcellular location">
    <subcellularLocation>
        <location evidence="1">Cell inner membrane</location>
        <topology evidence="1">Single-pass membrane protein</topology>
    </subcellularLocation>
</comment>
<comment type="similarity">
    <text evidence="1">Belongs to the TatA/E family.</text>
</comment>
<evidence type="ECO:0000255" key="1">
    <source>
        <dbReference type="HAMAP-Rule" id="MF_00236"/>
    </source>
</evidence>
<evidence type="ECO:0000256" key="2">
    <source>
        <dbReference type="SAM" id="MobiDB-lite"/>
    </source>
</evidence>
<organism>
    <name type="scientific">Helicobacter acinonychis (strain Sheeba)</name>
    <dbReference type="NCBI Taxonomy" id="382638"/>
    <lineage>
        <taxon>Bacteria</taxon>
        <taxon>Pseudomonadati</taxon>
        <taxon>Campylobacterota</taxon>
        <taxon>Epsilonproteobacteria</taxon>
        <taxon>Campylobacterales</taxon>
        <taxon>Helicobacteraceae</taxon>
        <taxon>Helicobacter</taxon>
    </lineage>
</organism>
<gene>
    <name evidence="1" type="primary">tatA</name>
    <name type="ordered locus">Hac_1001</name>
</gene>
<proteinExistence type="inferred from homology"/>
<name>TATA_HELAH</name>